<gene>
    <name evidence="1" type="primary">pyrG</name>
    <name type="synonym">ctrA</name>
    <name type="ordered locus">MSC_0134</name>
</gene>
<organism>
    <name type="scientific">Mycoplasma mycoides subsp. mycoides SC (strain CCUG 32753 / NCTC 10114 / PG1)</name>
    <dbReference type="NCBI Taxonomy" id="272632"/>
    <lineage>
        <taxon>Bacteria</taxon>
        <taxon>Bacillati</taxon>
        <taxon>Mycoplasmatota</taxon>
        <taxon>Mollicutes</taxon>
        <taxon>Mycoplasmataceae</taxon>
        <taxon>Mycoplasma</taxon>
    </lineage>
</organism>
<reference key="1">
    <citation type="journal article" date="2004" name="Genome Res.">
        <title>The genome sequence of Mycoplasma mycoides subsp. mycoides SC type strain PG1T, the causative agent of contagious bovine pleuropneumonia (CBPP).</title>
        <authorList>
            <person name="Westberg J."/>
            <person name="Persson A."/>
            <person name="Holmberg A."/>
            <person name="Goesmann A."/>
            <person name="Lundeberg J."/>
            <person name="Johansson K.-E."/>
            <person name="Pettersson B."/>
            <person name="Uhlen M."/>
        </authorList>
    </citation>
    <scope>NUCLEOTIDE SEQUENCE [LARGE SCALE GENOMIC DNA]</scope>
    <source>
        <strain>CCUG 32753 / NCTC 10114 / PG1</strain>
    </source>
</reference>
<protein>
    <recommendedName>
        <fullName evidence="1">CTP synthase</fullName>
        <ecNumber evidence="1">6.3.4.2</ecNumber>
    </recommendedName>
    <alternativeName>
        <fullName evidence="1">Cytidine 5'-triphosphate synthase</fullName>
    </alternativeName>
    <alternativeName>
        <fullName evidence="1">Cytidine triphosphate synthetase</fullName>
        <shortName evidence="1">CTP synthetase</shortName>
        <shortName evidence="1">CTPS</shortName>
    </alternativeName>
    <alternativeName>
        <fullName evidence="1">UTP--ammonia ligase</fullName>
    </alternativeName>
</protein>
<feature type="chain" id="PRO_0000266158" description="CTP synthase">
    <location>
        <begin position="1"/>
        <end position="532"/>
    </location>
</feature>
<feature type="domain" description="Glutamine amidotransferase type-1" evidence="1">
    <location>
        <begin position="292"/>
        <end position="532"/>
    </location>
</feature>
<feature type="region of interest" description="Amidoligase domain" evidence="1">
    <location>
        <begin position="1"/>
        <end position="267"/>
    </location>
</feature>
<feature type="active site" description="Nucleophile; for glutamine hydrolysis" evidence="1">
    <location>
        <position position="381"/>
    </location>
</feature>
<feature type="active site" evidence="1">
    <location>
        <position position="506"/>
    </location>
</feature>
<feature type="active site" evidence="1">
    <location>
        <position position="508"/>
    </location>
</feature>
<feature type="binding site" evidence="1">
    <location>
        <position position="13"/>
    </location>
    <ligand>
        <name>CTP</name>
        <dbReference type="ChEBI" id="CHEBI:37563"/>
        <note>allosteric inhibitor</note>
    </ligand>
</feature>
<feature type="binding site" evidence="1">
    <location>
        <position position="13"/>
    </location>
    <ligand>
        <name>UTP</name>
        <dbReference type="ChEBI" id="CHEBI:46398"/>
    </ligand>
</feature>
<feature type="binding site" evidence="1">
    <location>
        <begin position="14"/>
        <end position="19"/>
    </location>
    <ligand>
        <name>ATP</name>
        <dbReference type="ChEBI" id="CHEBI:30616"/>
    </ligand>
</feature>
<feature type="binding site" evidence="1">
    <location>
        <position position="54"/>
    </location>
    <ligand>
        <name>L-glutamine</name>
        <dbReference type="ChEBI" id="CHEBI:58359"/>
    </ligand>
</feature>
<feature type="binding site" evidence="1">
    <location>
        <position position="71"/>
    </location>
    <ligand>
        <name>ATP</name>
        <dbReference type="ChEBI" id="CHEBI:30616"/>
    </ligand>
</feature>
<feature type="binding site" evidence="1">
    <location>
        <position position="71"/>
    </location>
    <ligand>
        <name>Mg(2+)</name>
        <dbReference type="ChEBI" id="CHEBI:18420"/>
    </ligand>
</feature>
<feature type="binding site" evidence="1">
    <location>
        <position position="141"/>
    </location>
    <ligand>
        <name>Mg(2+)</name>
        <dbReference type="ChEBI" id="CHEBI:18420"/>
    </ligand>
</feature>
<feature type="binding site" evidence="1">
    <location>
        <begin position="148"/>
        <end position="150"/>
    </location>
    <ligand>
        <name>CTP</name>
        <dbReference type="ChEBI" id="CHEBI:37563"/>
        <note>allosteric inhibitor</note>
    </ligand>
</feature>
<feature type="binding site" evidence="1">
    <location>
        <begin position="188"/>
        <end position="193"/>
    </location>
    <ligand>
        <name>CTP</name>
        <dbReference type="ChEBI" id="CHEBI:37563"/>
        <note>allosteric inhibitor</note>
    </ligand>
</feature>
<feature type="binding site" evidence="1">
    <location>
        <begin position="188"/>
        <end position="193"/>
    </location>
    <ligand>
        <name>UTP</name>
        <dbReference type="ChEBI" id="CHEBI:46398"/>
    </ligand>
</feature>
<feature type="binding site" evidence="1">
    <location>
        <position position="224"/>
    </location>
    <ligand>
        <name>CTP</name>
        <dbReference type="ChEBI" id="CHEBI:37563"/>
        <note>allosteric inhibitor</note>
    </ligand>
</feature>
<feature type="binding site" evidence="1">
    <location>
        <position position="224"/>
    </location>
    <ligand>
        <name>UTP</name>
        <dbReference type="ChEBI" id="CHEBI:46398"/>
    </ligand>
</feature>
<feature type="binding site" evidence="1">
    <location>
        <position position="354"/>
    </location>
    <ligand>
        <name>L-glutamine</name>
        <dbReference type="ChEBI" id="CHEBI:58359"/>
    </ligand>
</feature>
<feature type="binding site" evidence="1">
    <location>
        <begin position="382"/>
        <end position="385"/>
    </location>
    <ligand>
        <name>L-glutamine</name>
        <dbReference type="ChEBI" id="CHEBI:58359"/>
    </ligand>
</feature>
<feature type="binding site" evidence="1">
    <location>
        <position position="405"/>
    </location>
    <ligand>
        <name>L-glutamine</name>
        <dbReference type="ChEBI" id="CHEBI:58359"/>
    </ligand>
</feature>
<feature type="binding site" evidence="1">
    <location>
        <position position="461"/>
    </location>
    <ligand>
        <name>L-glutamine</name>
        <dbReference type="ChEBI" id="CHEBI:58359"/>
    </ligand>
</feature>
<dbReference type="EC" id="6.3.4.2" evidence="1"/>
<dbReference type="EMBL" id="BX293980">
    <property type="protein sequence ID" value="CAE76781.1"/>
    <property type="molecule type" value="Genomic_DNA"/>
</dbReference>
<dbReference type="RefSeq" id="NP_975139.1">
    <property type="nucleotide sequence ID" value="NC_005364.2"/>
</dbReference>
<dbReference type="RefSeq" id="WP_011166338.1">
    <property type="nucleotide sequence ID" value="NC_005364.2"/>
</dbReference>
<dbReference type="SMR" id="Q6MUA3"/>
<dbReference type="STRING" id="272632.MSC_0134"/>
<dbReference type="KEGG" id="mmy:MSC_0134"/>
<dbReference type="PATRIC" id="fig|272632.4.peg.142"/>
<dbReference type="eggNOG" id="COG0504">
    <property type="taxonomic scope" value="Bacteria"/>
</dbReference>
<dbReference type="HOGENOM" id="CLU_011675_5_0_14"/>
<dbReference type="UniPathway" id="UPA00159">
    <property type="reaction ID" value="UER00277"/>
</dbReference>
<dbReference type="Proteomes" id="UP000001016">
    <property type="component" value="Chromosome"/>
</dbReference>
<dbReference type="GO" id="GO:0005829">
    <property type="term" value="C:cytosol"/>
    <property type="evidence" value="ECO:0007669"/>
    <property type="project" value="TreeGrafter"/>
</dbReference>
<dbReference type="GO" id="GO:0005524">
    <property type="term" value="F:ATP binding"/>
    <property type="evidence" value="ECO:0007669"/>
    <property type="project" value="UniProtKB-KW"/>
</dbReference>
<dbReference type="GO" id="GO:0003883">
    <property type="term" value="F:CTP synthase activity"/>
    <property type="evidence" value="ECO:0007669"/>
    <property type="project" value="UniProtKB-UniRule"/>
</dbReference>
<dbReference type="GO" id="GO:0004359">
    <property type="term" value="F:glutaminase activity"/>
    <property type="evidence" value="ECO:0007669"/>
    <property type="project" value="RHEA"/>
</dbReference>
<dbReference type="GO" id="GO:0042802">
    <property type="term" value="F:identical protein binding"/>
    <property type="evidence" value="ECO:0007669"/>
    <property type="project" value="TreeGrafter"/>
</dbReference>
<dbReference type="GO" id="GO:0046872">
    <property type="term" value="F:metal ion binding"/>
    <property type="evidence" value="ECO:0007669"/>
    <property type="project" value="UniProtKB-KW"/>
</dbReference>
<dbReference type="GO" id="GO:0044210">
    <property type="term" value="P:'de novo' CTP biosynthetic process"/>
    <property type="evidence" value="ECO:0007669"/>
    <property type="project" value="UniProtKB-UniRule"/>
</dbReference>
<dbReference type="GO" id="GO:0019856">
    <property type="term" value="P:pyrimidine nucleobase biosynthetic process"/>
    <property type="evidence" value="ECO:0007669"/>
    <property type="project" value="TreeGrafter"/>
</dbReference>
<dbReference type="CDD" id="cd03113">
    <property type="entry name" value="CTPS_N"/>
    <property type="match status" value="1"/>
</dbReference>
<dbReference type="CDD" id="cd01746">
    <property type="entry name" value="GATase1_CTP_Synthase"/>
    <property type="match status" value="1"/>
</dbReference>
<dbReference type="FunFam" id="3.40.50.300:FF:000009">
    <property type="entry name" value="CTP synthase"/>
    <property type="match status" value="1"/>
</dbReference>
<dbReference type="FunFam" id="3.40.50.880:FF:000002">
    <property type="entry name" value="CTP synthase"/>
    <property type="match status" value="1"/>
</dbReference>
<dbReference type="Gene3D" id="3.40.50.880">
    <property type="match status" value="1"/>
</dbReference>
<dbReference type="Gene3D" id="3.40.50.300">
    <property type="entry name" value="P-loop containing nucleotide triphosphate hydrolases"/>
    <property type="match status" value="1"/>
</dbReference>
<dbReference type="HAMAP" id="MF_01227">
    <property type="entry name" value="PyrG"/>
    <property type="match status" value="1"/>
</dbReference>
<dbReference type="InterPro" id="IPR029062">
    <property type="entry name" value="Class_I_gatase-like"/>
</dbReference>
<dbReference type="InterPro" id="IPR004468">
    <property type="entry name" value="CTP_synthase"/>
</dbReference>
<dbReference type="InterPro" id="IPR017456">
    <property type="entry name" value="CTP_synthase_N"/>
</dbReference>
<dbReference type="InterPro" id="IPR017926">
    <property type="entry name" value="GATASE"/>
</dbReference>
<dbReference type="InterPro" id="IPR033828">
    <property type="entry name" value="GATase1_CTP_Synthase"/>
</dbReference>
<dbReference type="InterPro" id="IPR027417">
    <property type="entry name" value="P-loop_NTPase"/>
</dbReference>
<dbReference type="NCBIfam" id="NF003792">
    <property type="entry name" value="PRK05380.1"/>
    <property type="match status" value="1"/>
</dbReference>
<dbReference type="NCBIfam" id="TIGR00337">
    <property type="entry name" value="PyrG"/>
    <property type="match status" value="1"/>
</dbReference>
<dbReference type="PANTHER" id="PTHR11550">
    <property type="entry name" value="CTP SYNTHASE"/>
    <property type="match status" value="1"/>
</dbReference>
<dbReference type="PANTHER" id="PTHR11550:SF0">
    <property type="entry name" value="CTP SYNTHASE-RELATED"/>
    <property type="match status" value="1"/>
</dbReference>
<dbReference type="Pfam" id="PF06418">
    <property type="entry name" value="CTP_synth_N"/>
    <property type="match status" value="1"/>
</dbReference>
<dbReference type="Pfam" id="PF00117">
    <property type="entry name" value="GATase"/>
    <property type="match status" value="1"/>
</dbReference>
<dbReference type="SUPFAM" id="SSF52317">
    <property type="entry name" value="Class I glutamine amidotransferase-like"/>
    <property type="match status" value="1"/>
</dbReference>
<dbReference type="SUPFAM" id="SSF52540">
    <property type="entry name" value="P-loop containing nucleoside triphosphate hydrolases"/>
    <property type="match status" value="1"/>
</dbReference>
<dbReference type="PROSITE" id="PS51273">
    <property type="entry name" value="GATASE_TYPE_1"/>
    <property type="match status" value="1"/>
</dbReference>
<keyword id="KW-0067">ATP-binding</keyword>
<keyword id="KW-0315">Glutamine amidotransferase</keyword>
<keyword id="KW-0436">Ligase</keyword>
<keyword id="KW-0460">Magnesium</keyword>
<keyword id="KW-0479">Metal-binding</keyword>
<keyword id="KW-0547">Nucleotide-binding</keyword>
<keyword id="KW-0665">Pyrimidine biosynthesis</keyword>
<keyword id="KW-1185">Reference proteome</keyword>
<sequence>MAKFIFVTGGVVSGLGKGITASSIGALLKASGLKVFMQKFDPYLNVDPGTMSPYQHGEVFVTKDGGETDLDLGHYERFIDEELTKLSSTTSGKIYLSVIQGERKGVNSGKTIQVVPHITDAIKQKVYQAAKQSQADVIISEIGGTVGDIESQPFIEAIRQIRLEQGKENVMFVHVVLLLWLAASKEYKTKPIQNSVKAMASLGIQPDVIVCRSDSSSPKDIKEKISLFCNVPITNIIDAIDQDSIYRVPLALAKQNLQDIIIEQLQLKAKNIDLSLWKQFNKKIDSSTEEIEISFVGKYIELQDAYLSVLESLKIAGWEFNKKIKIRWVQADKLDESNYKEVLKNSQGILVPGGFGKRGIEGMMLASRYARENDIPYLGICLGMQIATISIARDLLNWSDADSTEFNKNTTHPIFDYIKGIDRDNIGGTLRLGTMVTKLEKNSLVSKLYNSDIALERHRHRYEFNNEYKKDLESVGLRFSGIYEEKNIVEVVEMPSLKFFVASQFHPEFTSRPNKPTPLFKGFIKAIVENNK</sequence>
<name>PYRG_MYCMS</name>
<evidence type="ECO:0000255" key="1">
    <source>
        <dbReference type="HAMAP-Rule" id="MF_01227"/>
    </source>
</evidence>
<comment type="function">
    <text evidence="1">Catalyzes the ATP-dependent amination of UTP to CTP with either L-glutamine or ammonia as the source of nitrogen. Regulates intracellular CTP levels through interactions with the four ribonucleotide triphosphates.</text>
</comment>
<comment type="catalytic activity">
    <reaction evidence="1">
        <text>UTP + L-glutamine + ATP + H2O = CTP + L-glutamate + ADP + phosphate + 2 H(+)</text>
        <dbReference type="Rhea" id="RHEA:26426"/>
        <dbReference type="ChEBI" id="CHEBI:15377"/>
        <dbReference type="ChEBI" id="CHEBI:15378"/>
        <dbReference type="ChEBI" id="CHEBI:29985"/>
        <dbReference type="ChEBI" id="CHEBI:30616"/>
        <dbReference type="ChEBI" id="CHEBI:37563"/>
        <dbReference type="ChEBI" id="CHEBI:43474"/>
        <dbReference type="ChEBI" id="CHEBI:46398"/>
        <dbReference type="ChEBI" id="CHEBI:58359"/>
        <dbReference type="ChEBI" id="CHEBI:456216"/>
        <dbReference type="EC" id="6.3.4.2"/>
    </reaction>
</comment>
<comment type="catalytic activity">
    <reaction evidence="1">
        <text>L-glutamine + H2O = L-glutamate + NH4(+)</text>
        <dbReference type="Rhea" id="RHEA:15889"/>
        <dbReference type="ChEBI" id="CHEBI:15377"/>
        <dbReference type="ChEBI" id="CHEBI:28938"/>
        <dbReference type="ChEBI" id="CHEBI:29985"/>
        <dbReference type="ChEBI" id="CHEBI:58359"/>
    </reaction>
</comment>
<comment type="catalytic activity">
    <reaction evidence="1">
        <text>UTP + NH4(+) + ATP = CTP + ADP + phosphate + 2 H(+)</text>
        <dbReference type="Rhea" id="RHEA:16597"/>
        <dbReference type="ChEBI" id="CHEBI:15378"/>
        <dbReference type="ChEBI" id="CHEBI:28938"/>
        <dbReference type="ChEBI" id="CHEBI:30616"/>
        <dbReference type="ChEBI" id="CHEBI:37563"/>
        <dbReference type="ChEBI" id="CHEBI:43474"/>
        <dbReference type="ChEBI" id="CHEBI:46398"/>
        <dbReference type="ChEBI" id="CHEBI:456216"/>
    </reaction>
</comment>
<comment type="activity regulation">
    <text evidence="1">Allosterically activated by GTP, when glutamine is the substrate; GTP has no effect on the reaction when ammonia is the substrate. The allosteric effector GTP functions by stabilizing the protein conformation that binds the tetrahedral intermediate(s) formed during glutamine hydrolysis. Inhibited by the product CTP, via allosteric rather than competitive inhibition.</text>
</comment>
<comment type="pathway">
    <text evidence="1">Pyrimidine metabolism; CTP biosynthesis via de novo pathway; CTP from UDP: step 2/2.</text>
</comment>
<comment type="subunit">
    <text evidence="1">Homotetramer.</text>
</comment>
<comment type="miscellaneous">
    <text evidence="1">CTPSs have evolved a hybrid strategy for distinguishing between UTP and CTP. The overlapping regions of the product feedback inhibitory and substrate sites recognize a common feature in both compounds, the triphosphate moiety. To differentiate isosteric substrate and product pyrimidine rings, an additional pocket far from the expected kinase/ligase catalytic site, specifically recognizes the cytosine and ribose portions of the product inhibitor.</text>
</comment>
<comment type="similarity">
    <text evidence="1">Belongs to the CTP synthase family.</text>
</comment>
<accession>Q6MUA3</accession>
<proteinExistence type="inferred from homology"/>